<dbReference type="EMBL" id="AP006840">
    <property type="protein sequence ID" value="BAD41062.1"/>
    <property type="status" value="ALT_INIT"/>
    <property type="molecule type" value="Genomic_DNA"/>
</dbReference>
<dbReference type="SMR" id="Q67MN1"/>
<dbReference type="STRING" id="292459.STH2077"/>
<dbReference type="KEGG" id="sth:STH2077"/>
<dbReference type="eggNOG" id="COG4843">
    <property type="taxonomic scope" value="Bacteria"/>
</dbReference>
<dbReference type="HOGENOM" id="CLU_106166_1_0_9"/>
<dbReference type="OrthoDB" id="48231at2"/>
<dbReference type="Proteomes" id="UP000000417">
    <property type="component" value="Chromosome"/>
</dbReference>
<dbReference type="GO" id="GO:0005886">
    <property type="term" value="C:plasma membrane"/>
    <property type="evidence" value="ECO:0007669"/>
    <property type="project" value="UniProtKB-SubCell"/>
</dbReference>
<dbReference type="CDD" id="cd16381">
    <property type="entry name" value="YitT_C_like_1"/>
    <property type="match status" value="1"/>
</dbReference>
<dbReference type="Gene3D" id="3.30.70.120">
    <property type="match status" value="1"/>
</dbReference>
<dbReference type="HAMAP" id="MF_01515">
    <property type="entry name" value="UPF0316"/>
    <property type="match status" value="1"/>
</dbReference>
<dbReference type="InterPro" id="IPR019264">
    <property type="entry name" value="DUF2179"/>
</dbReference>
<dbReference type="InterPro" id="IPR044035">
    <property type="entry name" value="DUF5698"/>
</dbReference>
<dbReference type="InterPro" id="IPR015867">
    <property type="entry name" value="N-reg_PII/ATP_PRibTrfase_C"/>
</dbReference>
<dbReference type="InterPro" id="IPR022930">
    <property type="entry name" value="UPF0316"/>
</dbReference>
<dbReference type="NCBIfam" id="NF003194">
    <property type="entry name" value="PRK04164.1-5"/>
    <property type="match status" value="1"/>
</dbReference>
<dbReference type="PANTHER" id="PTHR40060">
    <property type="entry name" value="UPF0316 PROTEIN YEBE"/>
    <property type="match status" value="1"/>
</dbReference>
<dbReference type="PANTHER" id="PTHR40060:SF1">
    <property type="entry name" value="UPF0316 PROTEIN YEBE"/>
    <property type="match status" value="1"/>
</dbReference>
<dbReference type="Pfam" id="PF10035">
    <property type="entry name" value="DUF2179"/>
    <property type="match status" value="1"/>
</dbReference>
<dbReference type="Pfam" id="PF18955">
    <property type="entry name" value="DUF5698"/>
    <property type="match status" value="1"/>
</dbReference>
<comment type="subcellular location">
    <subcellularLocation>
        <location evidence="1">Cell membrane</location>
        <topology evidence="1">Multi-pass membrane protein</topology>
    </subcellularLocation>
</comment>
<comment type="similarity">
    <text evidence="1">Belongs to the UPF0316 family.</text>
</comment>
<comment type="sequence caution" evidence="2">
    <conflict type="erroneous initiation">
        <sequence resource="EMBL-CDS" id="BAD41062"/>
    </conflict>
</comment>
<gene>
    <name type="ordered locus">STH2077</name>
</gene>
<organism>
    <name type="scientific">Symbiobacterium thermophilum (strain DSM 24528 / JCM 14929 / IAM 14863 / T)</name>
    <dbReference type="NCBI Taxonomy" id="292459"/>
    <lineage>
        <taxon>Bacteria</taxon>
        <taxon>Bacillati</taxon>
        <taxon>Bacillota</taxon>
        <taxon>Clostridia</taxon>
        <taxon>Eubacteriales</taxon>
        <taxon>Symbiobacteriaceae</taxon>
        <taxon>Symbiobacterium</taxon>
    </lineage>
</organism>
<proteinExistence type="inferred from homology"/>
<reference key="1">
    <citation type="journal article" date="2004" name="Nucleic Acids Res.">
        <title>Genome sequence of Symbiobacterium thermophilum, an uncultivable bacterium that depends on microbial commensalism.</title>
        <authorList>
            <person name="Ueda K."/>
            <person name="Yamashita A."/>
            <person name="Ishikawa J."/>
            <person name="Shimada M."/>
            <person name="Watsuji T."/>
            <person name="Morimura K."/>
            <person name="Ikeda H."/>
            <person name="Hattori M."/>
            <person name="Beppu T."/>
        </authorList>
    </citation>
    <scope>NUCLEOTIDE SEQUENCE [LARGE SCALE GENOMIC DNA]</scope>
    <source>
        <strain>DSM 24528 / JCM 14929 / IAM 14863 / T</strain>
    </source>
</reference>
<keyword id="KW-1003">Cell membrane</keyword>
<keyword id="KW-0472">Membrane</keyword>
<keyword id="KW-1185">Reference proteome</keyword>
<keyword id="KW-0812">Transmembrane</keyword>
<keyword id="KW-1133">Transmembrane helix</keyword>
<name>Y2077_SYMTH</name>
<sequence>MRLAKEVEAALDLLIIFLAQATYVSVNTVRWIILVKGRRLLASAISFFEVILWVYALGLVVSQLSDPVKVATYALGYAVGALVGSKIEERLALGYVLFQVITTRIGELAPALREHGLGVTDWRAEGRMGQREVLMVVARRKNGPQVVRLLEELDPQAFVVQLDASWYRGGFIQKMLQ</sequence>
<feature type="chain" id="PRO_0000171960" description="UPF0316 protein STH2077">
    <location>
        <begin position="1"/>
        <end position="177"/>
    </location>
</feature>
<feature type="transmembrane region" description="Helical" evidence="1">
    <location>
        <begin position="9"/>
        <end position="29"/>
    </location>
</feature>
<feature type="transmembrane region" description="Helical" evidence="1">
    <location>
        <begin position="41"/>
        <end position="61"/>
    </location>
</feature>
<evidence type="ECO:0000255" key="1">
    <source>
        <dbReference type="HAMAP-Rule" id="MF_01515"/>
    </source>
</evidence>
<evidence type="ECO:0000305" key="2"/>
<accession>Q67MN1</accession>
<protein>
    <recommendedName>
        <fullName evidence="1">UPF0316 protein STH2077</fullName>
    </recommendedName>
</protein>